<reference key="1">
    <citation type="journal article" date="1996" name="J. Cell Sci.">
        <title>Isolation of the Schizosaccharomyces pombe RAD54 homologue, rhp54+, a gene involved in the repair of radiation damage and replication fidelity.</title>
        <authorList>
            <person name="Muris D.F.R."/>
            <person name="Vreeken K."/>
            <person name="Carr A.M."/>
            <person name="Murray J.M."/>
            <person name="Smit C."/>
            <person name="Lohman P.H.M."/>
            <person name="Pastink A."/>
        </authorList>
    </citation>
    <scope>NUCLEOTIDE SEQUENCE [GENOMIC DNA]</scope>
</reference>
<reference key="2">
    <citation type="journal article" date="2002" name="Nature">
        <title>The genome sequence of Schizosaccharomyces pombe.</title>
        <authorList>
            <person name="Wood V."/>
            <person name="Gwilliam R."/>
            <person name="Rajandream M.A."/>
            <person name="Lyne M.H."/>
            <person name="Lyne R."/>
            <person name="Stewart A."/>
            <person name="Sgouros J.G."/>
            <person name="Peat N."/>
            <person name="Hayles J."/>
            <person name="Baker S.G."/>
            <person name="Basham D."/>
            <person name="Bowman S."/>
            <person name="Brooks K."/>
            <person name="Brown D."/>
            <person name="Brown S."/>
            <person name="Chillingworth T."/>
            <person name="Churcher C.M."/>
            <person name="Collins M."/>
            <person name="Connor R."/>
            <person name="Cronin A."/>
            <person name="Davis P."/>
            <person name="Feltwell T."/>
            <person name="Fraser A."/>
            <person name="Gentles S."/>
            <person name="Goble A."/>
            <person name="Hamlin N."/>
            <person name="Harris D.E."/>
            <person name="Hidalgo J."/>
            <person name="Hodgson G."/>
            <person name="Holroyd S."/>
            <person name="Hornsby T."/>
            <person name="Howarth S."/>
            <person name="Huckle E.J."/>
            <person name="Hunt S."/>
            <person name="Jagels K."/>
            <person name="James K.D."/>
            <person name="Jones L."/>
            <person name="Jones M."/>
            <person name="Leather S."/>
            <person name="McDonald S."/>
            <person name="McLean J."/>
            <person name="Mooney P."/>
            <person name="Moule S."/>
            <person name="Mungall K.L."/>
            <person name="Murphy L.D."/>
            <person name="Niblett D."/>
            <person name="Odell C."/>
            <person name="Oliver K."/>
            <person name="O'Neil S."/>
            <person name="Pearson D."/>
            <person name="Quail M.A."/>
            <person name="Rabbinowitsch E."/>
            <person name="Rutherford K.M."/>
            <person name="Rutter S."/>
            <person name="Saunders D."/>
            <person name="Seeger K."/>
            <person name="Sharp S."/>
            <person name="Skelton J."/>
            <person name="Simmonds M.N."/>
            <person name="Squares R."/>
            <person name="Squares S."/>
            <person name="Stevens K."/>
            <person name="Taylor K."/>
            <person name="Taylor R.G."/>
            <person name="Tivey A."/>
            <person name="Walsh S.V."/>
            <person name="Warren T."/>
            <person name="Whitehead S."/>
            <person name="Woodward J.R."/>
            <person name="Volckaert G."/>
            <person name="Aert R."/>
            <person name="Robben J."/>
            <person name="Grymonprez B."/>
            <person name="Weltjens I."/>
            <person name="Vanstreels E."/>
            <person name="Rieger M."/>
            <person name="Schaefer M."/>
            <person name="Mueller-Auer S."/>
            <person name="Gabel C."/>
            <person name="Fuchs M."/>
            <person name="Duesterhoeft A."/>
            <person name="Fritzc C."/>
            <person name="Holzer E."/>
            <person name="Moestl D."/>
            <person name="Hilbert H."/>
            <person name="Borzym K."/>
            <person name="Langer I."/>
            <person name="Beck A."/>
            <person name="Lehrach H."/>
            <person name="Reinhardt R."/>
            <person name="Pohl T.M."/>
            <person name="Eger P."/>
            <person name="Zimmermann W."/>
            <person name="Wedler H."/>
            <person name="Wambutt R."/>
            <person name="Purnelle B."/>
            <person name="Goffeau A."/>
            <person name="Cadieu E."/>
            <person name="Dreano S."/>
            <person name="Gloux S."/>
            <person name="Lelaure V."/>
            <person name="Mottier S."/>
            <person name="Galibert F."/>
            <person name="Aves S.J."/>
            <person name="Xiang Z."/>
            <person name="Hunt C."/>
            <person name="Moore K."/>
            <person name="Hurst S.M."/>
            <person name="Lucas M."/>
            <person name="Rochet M."/>
            <person name="Gaillardin C."/>
            <person name="Tallada V.A."/>
            <person name="Garzon A."/>
            <person name="Thode G."/>
            <person name="Daga R.R."/>
            <person name="Cruzado L."/>
            <person name="Jimenez J."/>
            <person name="Sanchez M."/>
            <person name="del Rey F."/>
            <person name="Benito J."/>
            <person name="Dominguez A."/>
            <person name="Revuelta J.L."/>
            <person name="Moreno S."/>
            <person name="Armstrong J."/>
            <person name="Forsburg S.L."/>
            <person name="Cerutti L."/>
            <person name="Lowe T."/>
            <person name="McCombie W.R."/>
            <person name="Paulsen I."/>
            <person name="Potashkin J."/>
            <person name="Shpakovski G.V."/>
            <person name="Ussery D."/>
            <person name="Barrell B.G."/>
            <person name="Nurse P."/>
        </authorList>
    </citation>
    <scope>NUCLEOTIDE SEQUENCE [LARGE SCALE GENOMIC DNA]</scope>
    <source>
        <strain>972 / ATCC 24843</strain>
    </source>
</reference>
<reference key="3">
    <citation type="journal article" date="2003" name="Mol. Biol. Cell">
        <title>Schizosaccharomyces pombe Rdh54 (TID1) acts with Rhp54 (RAD54) to repair meiotic double-strand breaks.</title>
        <authorList>
            <person name="Catlett M.G."/>
            <person name="Forsburg S.L."/>
        </authorList>
    </citation>
    <scope>INTERACTION WITH RHP51</scope>
</reference>
<dbReference type="EC" id="3.6.4.12" evidence="1"/>
<dbReference type="EMBL" id="Z29640">
    <property type="protein sequence ID" value="CAA82750.1"/>
    <property type="molecule type" value="Genomic_DNA"/>
</dbReference>
<dbReference type="EMBL" id="CU329670">
    <property type="protein sequence ID" value="CAB10100.1"/>
    <property type="molecule type" value="Genomic_DNA"/>
</dbReference>
<dbReference type="PIR" id="S41886">
    <property type="entry name" value="S41886"/>
</dbReference>
<dbReference type="RefSeq" id="NP_594290.1">
    <property type="nucleotide sequence ID" value="NM_001019713.2"/>
</dbReference>
<dbReference type="SMR" id="P41410"/>
<dbReference type="BioGRID" id="279199">
    <property type="interactions" value="25"/>
</dbReference>
<dbReference type="FunCoup" id="P41410">
    <property type="interactions" value="562"/>
</dbReference>
<dbReference type="IntAct" id="P41410">
    <property type="interactions" value="1"/>
</dbReference>
<dbReference type="STRING" id="284812.P41410"/>
<dbReference type="iPTMnet" id="P41410"/>
<dbReference type="SwissPalm" id="P41410"/>
<dbReference type="PaxDb" id="4896-SPAC15A10.03c.1"/>
<dbReference type="EnsemblFungi" id="SPAC15A10.03c.1">
    <property type="protein sequence ID" value="SPAC15A10.03c.1:pep"/>
    <property type="gene ID" value="SPAC15A10.03c"/>
</dbReference>
<dbReference type="GeneID" id="2542749"/>
<dbReference type="KEGG" id="spo:2542749"/>
<dbReference type="PomBase" id="SPAC15A10.03c"/>
<dbReference type="VEuPathDB" id="FungiDB:SPAC15A10.03c"/>
<dbReference type="eggNOG" id="KOG0390">
    <property type="taxonomic scope" value="Eukaryota"/>
</dbReference>
<dbReference type="HOGENOM" id="CLU_000315_10_2_1"/>
<dbReference type="InParanoid" id="P41410"/>
<dbReference type="OMA" id="YTEHERM"/>
<dbReference type="PhylomeDB" id="P41410"/>
<dbReference type="PRO" id="PR:P41410"/>
<dbReference type="Proteomes" id="UP000002485">
    <property type="component" value="Chromosome I"/>
</dbReference>
<dbReference type="GO" id="GO:0072686">
    <property type="term" value="C:mitotic spindle"/>
    <property type="evidence" value="ECO:0007005"/>
    <property type="project" value="PomBase"/>
</dbReference>
<dbReference type="GO" id="GO:0005634">
    <property type="term" value="C:nucleus"/>
    <property type="evidence" value="ECO:0007005"/>
    <property type="project" value="PomBase"/>
</dbReference>
<dbReference type="GO" id="GO:0035861">
    <property type="term" value="C:site of double-strand break"/>
    <property type="evidence" value="ECO:0000314"/>
    <property type="project" value="PomBase"/>
</dbReference>
<dbReference type="GO" id="GO:0005524">
    <property type="term" value="F:ATP binding"/>
    <property type="evidence" value="ECO:0007669"/>
    <property type="project" value="UniProtKB-KW"/>
</dbReference>
<dbReference type="GO" id="GO:0016887">
    <property type="term" value="F:ATP hydrolysis activity"/>
    <property type="evidence" value="ECO:0007669"/>
    <property type="project" value="RHEA"/>
</dbReference>
<dbReference type="GO" id="GO:0003677">
    <property type="term" value="F:DNA binding"/>
    <property type="evidence" value="ECO:0000255"/>
    <property type="project" value="PomBase"/>
</dbReference>
<dbReference type="GO" id="GO:0015616">
    <property type="term" value="F:DNA translocase activity"/>
    <property type="evidence" value="ECO:0000318"/>
    <property type="project" value="GO_Central"/>
</dbReference>
<dbReference type="GO" id="GO:0004386">
    <property type="term" value="F:helicase activity"/>
    <property type="evidence" value="ECO:0007669"/>
    <property type="project" value="UniProtKB-KW"/>
</dbReference>
<dbReference type="GO" id="GO:0046872">
    <property type="term" value="F:metal ion binding"/>
    <property type="evidence" value="ECO:0007669"/>
    <property type="project" value="UniProtKB-KW"/>
</dbReference>
<dbReference type="GO" id="GO:0006310">
    <property type="term" value="P:DNA recombination"/>
    <property type="evidence" value="ECO:0000315"/>
    <property type="project" value="PomBase"/>
</dbReference>
<dbReference type="GO" id="GO:0045003">
    <property type="term" value="P:double-strand break repair via synthesis-dependent strand annealing"/>
    <property type="evidence" value="ECO:0000318"/>
    <property type="project" value="GO_Central"/>
</dbReference>
<dbReference type="GO" id="GO:0007534">
    <property type="term" value="P:gene conversion at mating-type locus"/>
    <property type="evidence" value="ECO:0000314"/>
    <property type="project" value="PomBase"/>
</dbReference>
<dbReference type="GO" id="GO:0006311">
    <property type="term" value="P:meiotic gene conversion"/>
    <property type="evidence" value="ECO:0000315"/>
    <property type="project" value="PomBase"/>
</dbReference>
<dbReference type="GO" id="GO:0007131">
    <property type="term" value="P:reciprocal meiotic recombination"/>
    <property type="evidence" value="ECO:0000315"/>
    <property type="project" value="PomBase"/>
</dbReference>
<dbReference type="CDD" id="cd18067">
    <property type="entry name" value="DEXHc_RAD54A"/>
    <property type="match status" value="1"/>
</dbReference>
<dbReference type="CDD" id="cd18793">
    <property type="entry name" value="SF2_C_SNF"/>
    <property type="match status" value="1"/>
</dbReference>
<dbReference type="FunFam" id="3.40.50.10810:FF:000010">
    <property type="entry name" value="DNA repair and recombination protein RAD54-like"/>
    <property type="match status" value="1"/>
</dbReference>
<dbReference type="FunFam" id="3.40.50.300:FF:000332">
    <property type="entry name" value="DNA repair and recombination protein RAD54-like"/>
    <property type="match status" value="1"/>
</dbReference>
<dbReference type="Gene3D" id="3.40.50.300">
    <property type="entry name" value="P-loop containing nucleotide triphosphate hydrolases"/>
    <property type="match status" value="1"/>
</dbReference>
<dbReference type="Gene3D" id="1.20.120.850">
    <property type="entry name" value="SWI2/SNF2 ATPases, N-terminal domain"/>
    <property type="match status" value="1"/>
</dbReference>
<dbReference type="Gene3D" id="3.40.50.10810">
    <property type="entry name" value="Tandem AAA-ATPase domain"/>
    <property type="match status" value="1"/>
</dbReference>
<dbReference type="InterPro" id="IPR014001">
    <property type="entry name" value="Helicase_ATP-bd"/>
</dbReference>
<dbReference type="InterPro" id="IPR001650">
    <property type="entry name" value="Helicase_C-like"/>
</dbReference>
<dbReference type="InterPro" id="IPR027417">
    <property type="entry name" value="P-loop_NTPase"/>
</dbReference>
<dbReference type="InterPro" id="IPR013967">
    <property type="entry name" value="Rad54_N"/>
</dbReference>
<dbReference type="InterPro" id="IPR038718">
    <property type="entry name" value="SNF2-like_sf"/>
</dbReference>
<dbReference type="InterPro" id="IPR049730">
    <property type="entry name" value="SNF2/RAD54-like_C"/>
</dbReference>
<dbReference type="InterPro" id="IPR000330">
    <property type="entry name" value="SNF2_N"/>
</dbReference>
<dbReference type="InterPro" id="IPR050496">
    <property type="entry name" value="SNF2_RAD54_helicase_repair"/>
</dbReference>
<dbReference type="PANTHER" id="PTHR45629:SF7">
    <property type="entry name" value="DNA EXCISION REPAIR PROTEIN ERCC-6-RELATED"/>
    <property type="match status" value="1"/>
</dbReference>
<dbReference type="PANTHER" id="PTHR45629">
    <property type="entry name" value="SNF2/RAD54 FAMILY MEMBER"/>
    <property type="match status" value="1"/>
</dbReference>
<dbReference type="Pfam" id="PF00271">
    <property type="entry name" value="Helicase_C"/>
    <property type="match status" value="1"/>
</dbReference>
<dbReference type="Pfam" id="PF08658">
    <property type="entry name" value="Rad54_N"/>
    <property type="match status" value="1"/>
</dbReference>
<dbReference type="Pfam" id="PF00176">
    <property type="entry name" value="SNF2-rel_dom"/>
    <property type="match status" value="1"/>
</dbReference>
<dbReference type="SMART" id="SM00487">
    <property type="entry name" value="DEXDc"/>
    <property type="match status" value="1"/>
</dbReference>
<dbReference type="SMART" id="SM00490">
    <property type="entry name" value="HELICc"/>
    <property type="match status" value="1"/>
</dbReference>
<dbReference type="SUPFAM" id="SSF52540">
    <property type="entry name" value="P-loop containing nucleoside triphosphate hydrolases"/>
    <property type="match status" value="2"/>
</dbReference>
<dbReference type="PROSITE" id="PS51192">
    <property type="entry name" value="HELICASE_ATP_BIND_1"/>
    <property type="match status" value="1"/>
</dbReference>
<dbReference type="PROSITE" id="PS51194">
    <property type="entry name" value="HELICASE_CTER"/>
    <property type="match status" value="1"/>
</dbReference>
<keyword id="KW-0067">ATP-binding</keyword>
<keyword id="KW-0227">DNA damage</keyword>
<keyword id="KW-0234">DNA repair</keyword>
<keyword id="KW-0238">DNA-binding</keyword>
<keyword id="KW-0347">Helicase</keyword>
<keyword id="KW-0378">Hydrolase</keyword>
<keyword id="KW-0479">Metal-binding</keyword>
<keyword id="KW-0547">Nucleotide-binding</keyword>
<keyword id="KW-0539">Nucleus</keyword>
<keyword id="KW-0597">Phosphoprotein</keyword>
<keyword id="KW-1185">Reference proteome</keyword>
<keyword id="KW-0862">Zinc</keyword>
<proteinExistence type="evidence at protein level"/>
<comment type="function">
    <text evidence="1">Plays an essential role in homologous recombination (HR) which is a major pathway for repairing DNA double-strand breaks (DSBs), single-stranded DNA (ssDNA) gaps, and stalled or collapsed replication forks. Acts as a molecular motor during the homology search and guides RAD51 ssDNA along a donor dsDNA thereby changing the homology search from the diffusion-based mechanism to a motor-guided mechanism. Plays also an essential role in RAD51-mediated synaptic complex formation which consists of three strands encased in a protein filament formed once homology is recognized. Once DNA strand exchange occured, dissociates RAD51 from nucleoprotein filaments formed on dsDNA.</text>
</comment>
<comment type="catalytic activity">
    <reaction evidence="1">
        <text>ATP + H2O = ADP + phosphate + H(+)</text>
        <dbReference type="Rhea" id="RHEA:13065"/>
        <dbReference type="ChEBI" id="CHEBI:15377"/>
        <dbReference type="ChEBI" id="CHEBI:15378"/>
        <dbReference type="ChEBI" id="CHEBI:30616"/>
        <dbReference type="ChEBI" id="CHEBI:43474"/>
        <dbReference type="ChEBI" id="CHEBI:456216"/>
        <dbReference type="EC" id="3.6.4.12"/>
    </reaction>
</comment>
<comment type="subunit">
    <text evidence="2 7">Homohexamer (By similarity). Interacts with rhp51.</text>
</comment>
<comment type="interaction">
    <interactant intactId="EBI-1167415">
        <id>P41410</id>
    </interactant>
    <interactant intactId="EBI-926960">
        <id>P36601</id>
        <label>rhp51</label>
    </interactant>
    <organismsDiffer>false</organismsDiffer>
    <experiments>3</experiments>
</comment>
<comment type="subcellular location">
    <subcellularLocation>
        <location>Nucleus</location>
    </subcellularLocation>
</comment>
<comment type="similarity">
    <text evidence="8">Belongs to the SNF2/RAD54 helicase family.</text>
</comment>
<organism>
    <name type="scientific">Schizosaccharomyces pombe (strain 972 / ATCC 24843)</name>
    <name type="common">Fission yeast</name>
    <dbReference type="NCBI Taxonomy" id="284812"/>
    <lineage>
        <taxon>Eukaryota</taxon>
        <taxon>Fungi</taxon>
        <taxon>Dikarya</taxon>
        <taxon>Ascomycota</taxon>
        <taxon>Taphrinomycotina</taxon>
        <taxon>Schizosaccharomycetes</taxon>
        <taxon>Schizosaccharomycetales</taxon>
        <taxon>Schizosaccharomycetaceae</taxon>
        <taxon>Schizosaccharomyces</taxon>
    </lineage>
</organism>
<feature type="chain" id="PRO_0000074343" description="DNA repair protein rhp54">
    <location>
        <begin position="1"/>
        <end position="852"/>
    </location>
</feature>
<feature type="domain" description="Helicase ATP-binding" evidence="4">
    <location>
        <begin position="281"/>
        <end position="459"/>
    </location>
</feature>
<feature type="domain" description="Helicase C-terminal" evidence="5">
    <location>
        <begin position="614"/>
        <end position="767"/>
    </location>
</feature>
<feature type="region of interest" description="Disordered" evidence="6">
    <location>
        <begin position="187"/>
        <end position="208"/>
    </location>
</feature>
<feature type="short sequence motif" description="Nuclear localization signal" evidence="3">
    <location>
        <begin position="35"/>
        <end position="51"/>
    </location>
</feature>
<feature type="short sequence motif" description="Nuclear localization signal" evidence="3">
    <location>
        <begin position="178"/>
        <end position="181"/>
    </location>
</feature>
<feature type="short sequence motif" description="DEGH box">
    <location>
        <begin position="410"/>
        <end position="413"/>
    </location>
</feature>
<feature type="compositionally biased region" description="Basic and acidic residues" evidence="6">
    <location>
        <begin position="187"/>
        <end position="205"/>
    </location>
</feature>
<feature type="binding site" evidence="4">
    <location>
        <begin position="294"/>
        <end position="301"/>
    </location>
    <ligand>
        <name>ATP</name>
        <dbReference type="ChEBI" id="CHEBI:30616"/>
    </ligand>
</feature>
<feature type="sequence conflict" description="In Ref. 1; CAA82750." evidence="8" ref="1">
    <original>A</original>
    <variation>T</variation>
    <location>
        <position position="261"/>
    </location>
</feature>
<name>RAD54_SCHPO</name>
<gene>
    <name type="primary">rhp54</name>
    <name type="synonym">rad54</name>
    <name type="ORF">SPAC15A10.03c</name>
</gene>
<accession>P41410</accession>
<accession>O13723</accession>
<protein>
    <recommendedName>
        <fullName>DNA repair protein rhp54</fullName>
        <ecNumber evidence="1">3.6.4.12</ecNumber>
    </recommendedName>
    <alternativeName>
        <fullName>RAD54 homolog 1</fullName>
    </alternativeName>
</protein>
<evidence type="ECO:0000250" key="1">
    <source>
        <dbReference type="UniProtKB" id="P32863"/>
    </source>
</evidence>
<evidence type="ECO:0000250" key="2">
    <source>
        <dbReference type="UniProtKB" id="Q7ZV09"/>
    </source>
</evidence>
<evidence type="ECO:0000255" key="3"/>
<evidence type="ECO:0000255" key="4">
    <source>
        <dbReference type="PROSITE-ProRule" id="PRU00541"/>
    </source>
</evidence>
<evidence type="ECO:0000255" key="5">
    <source>
        <dbReference type="PROSITE-ProRule" id="PRU00542"/>
    </source>
</evidence>
<evidence type="ECO:0000256" key="6">
    <source>
        <dbReference type="SAM" id="MobiDB-lite"/>
    </source>
</evidence>
<evidence type="ECO:0000269" key="7">
    <source>
    </source>
</evidence>
<evidence type="ECO:0000305" key="8"/>
<sequence length="852" mass="96654">MIQQPTTAKPRISTSSKLNTVLSKNKENVPGKLFKKFKCPSLVISEKRKELPLRKKPRVNYSEYGSVDGKYDSAYVSENVSGLATIKEANRLILNHERRDPSTVIKKQFSVPKPIKGHEDISKLCAHRPPPTLGMKRKVDFIPRPLYDPADEFAIVLYDPTTDADEIIPDIKEVLAEKRKKDELLKNRKGKKEISDSEPESDHDSCVSTDTVASCSTEQSLITSNTSKHRRPNKSLKDLLGIQKEKPPPPPVAVVIDPKLARILRPHQIEGVKFLYKCVTGRIDRCANGCIMADEMGLGKTLQCIALLWTLLKQSPQAGKPTIEKAIITCPSSLVKNWANELVKWLGKDAITPFILDGKSSKQELIMALQQWASVHGRQVTRPVLIASYETLRSYVEHLNNAEIGMLLCDEGHRLKNSDSLTFTALDKLNVQRRVILSGTPIQNDLSEYFSLLNFANPGLLGSRQEFRKNYEIPILKGRDADGTEKDKENGDAKLAELAKIVNRFIIRRTNDILSKYLPVKYEHVVFCNLSEFQLSLYKHFITSPEINKILRGTGSQPLKAIGLLKKICNHPDLLNLTEDLEGCEALFPPGFIPRELRGRDRNIDSSLSGKMLVLERMLYQIKQETDDKIVLISNYTSTLDLFEQLCRARGYKALRLDGTMNVNKRQRLVDTFNDPEKDAFVFLLSSKAGGCGINLIGANRLILFDPDWNPAADQQALARVWRDGQKKDCFVYRFIATGTIEEKIFQRQSHKQSLSSCVVDEAQDVERHFSLDNLRQLFQLNDHTVCETHETYKCKRCRDGKQFIRAPAMLYGDTSTWNHFTNPTLDRIEDHLLKREAGKQQVSTVFQYKSH</sequence>